<gene>
    <name evidence="3" type="primary">cntK</name>
    <name evidence="7" type="ordered locus">SAV2470</name>
</gene>
<proteinExistence type="evidence at protein level"/>
<reference key="1">
    <citation type="journal article" date="2001" name="Lancet">
        <title>Whole genome sequencing of meticillin-resistant Staphylococcus aureus.</title>
        <authorList>
            <person name="Kuroda M."/>
            <person name="Ohta T."/>
            <person name="Uchiyama I."/>
            <person name="Baba T."/>
            <person name="Yuzawa H."/>
            <person name="Kobayashi I."/>
            <person name="Cui L."/>
            <person name="Oguchi A."/>
            <person name="Aoki K."/>
            <person name="Nagai Y."/>
            <person name="Lian J.-Q."/>
            <person name="Ito T."/>
            <person name="Kanamori M."/>
            <person name="Matsumaru H."/>
            <person name="Maruyama A."/>
            <person name="Murakami H."/>
            <person name="Hosoyama A."/>
            <person name="Mizutani-Ui Y."/>
            <person name="Takahashi N.K."/>
            <person name="Sawano T."/>
            <person name="Inoue R."/>
            <person name="Kaito C."/>
            <person name="Sekimizu K."/>
            <person name="Hirakawa H."/>
            <person name="Kuhara S."/>
            <person name="Goto S."/>
            <person name="Yabuzaki J."/>
            <person name="Kanehisa M."/>
            <person name="Yamashita A."/>
            <person name="Oshima K."/>
            <person name="Furuya K."/>
            <person name="Yoshino C."/>
            <person name="Shiba T."/>
            <person name="Hattori M."/>
            <person name="Ogasawara N."/>
            <person name="Hayashi H."/>
            <person name="Hiramatsu K."/>
        </authorList>
    </citation>
    <scope>NUCLEOTIDE SEQUENCE [LARGE SCALE GENOMIC DNA]</scope>
    <source>
        <strain>Mu50 / ATCC 700699</strain>
    </source>
</reference>
<reference key="2">
    <citation type="journal article" date="2016" name="Science">
        <title>Biosynthesis of a broad-spectrum nicotianamine-like metallophore in Staphylococcus aureus.</title>
        <authorList>
            <person name="Ghssein G."/>
            <person name="Brutesco C."/>
            <person name="Ouerdane L."/>
            <person name="Fojcik C."/>
            <person name="Izaute A."/>
            <person name="Wang S."/>
            <person name="Hajjar C."/>
            <person name="Lobinski R."/>
            <person name="Lemaire D."/>
            <person name="Richaud P."/>
            <person name="Voulhoux R."/>
            <person name="Espaillat A."/>
            <person name="Cava F."/>
            <person name="Pignol D."/>
            <person name="Borezee-Durant E."/>
            <person name="Arnoux P."/>
        </authorList>
    </citation>
    <scope>FUNCTION</scope>
    <scope>CATALYTIC ACTIVITY</scope>
    <scope>SUBSTRATE SPECIFICITY</scope>
    <scope>INDUCTION</scope>
    <source>
        <strain>Mu50 / ATCC 700699</strain>
    </source>
</reference>
<reference evidence="8 9" key="3">
    <citation type="journal article" date="2019" name="Int. J. Biol. Macromol.">
        <title>Crystal structure of CntK, the cofactor-independent histidine racemase in staphylopine-mediated metal acquisition of Staphylococcus aureus.</title>
        <authorList>
            <person name="Luo S."/>
            <person name="Ju Y."/>
            <person name="Zhou J."/>
            <person name="Gu Q."/>
            <person name="Xu J."/>
            <person name="Zhou H."/>
        </authorList>
    </citation>
    <scope>X-RAY CRYSTALLOGRAPHY (1.58 ANGSTROMS) OF 2-273 OF WILD-TYPE AND MUTANT SER-72</scope>
    <scope>FUNCTION</scope>
    <scope>CATALYTIC ACTIVITY</scope>
    <scope>SUBUNIT</scope>
    <scope>MOLECULAR DYNAMIC SIMULATIONS</scope>
    <scope>MUTAGENESIS OF ASN-16; GLU-46; GLN-47; CYS-72 AND GLU-208</scope>
    <scope>ACTIVE SITE</scope>
    <source>
        <strain>MRSA R3708</strain>
    </source>
</reference>
<reference evidence="10" key="4">
    <citation type="submission" date="2019-10" db="PDB data bank">
        <title>Crystal structure of S. aureus CntK in inactive state.</title>
        <authorList>
            <person name="Ju Y."/>
            <person name="Luo S."/>
            <person name="Zhou H."/>
        </authorList>
    </citation>
    <scope>X-RAY CRYSTALLOGRAPHY (2.00 ANGSTROMS)</scope>
</reference>
<organism>
    <name type="scientific">Staphylococcus aureus (strain Mu50 / ATCC 700699)</name>
    <dbReference type="NCBI Taxonomy" id="158878"/>
    <lineage>
        <taxon>Bacteria</taxon>
        <taxon>Bacillati</taxon>
        <taxon>Bacillota</taxon>
        <taxon>Bacilli</taxon>
        <taxon>Bacillales</taxon>
        <taxon>Staphylococcaceae</taxon>
        <taxon>Staphylococcus</taxon>
    </lineage>
</organism>
<keyword id="KW-0002">3D-structure</keyword>
<keyword id="KW-0963">Cytoplasm</keyword>
<keyword id="KW-0413">Isomerase</keyword>
<evidence type="ECO:0000269" key="1">
    <source>
    </source>
</evidence>
<evidence type="ECO:0000269" key="2">
    <source>
    </source>
</evidence>
<evidence type="ECO:0000303" key="3">
    <source>
    </source>
</evidence>
<evidence type="ECO:0000305" key="4"/>
<evidence type="ECO:0000305" key="5">
    <source>
    </source>
</evidence>
<evidence type="ECO:0000305" key="6">
    <source>
    </source>
</evidence>
<evidence type="ECO:0000312" key="7">
    <source>
        <dbReference type="EMBL" id="BAB58632.1"/>
    </source>
</evidence>
<evidence type="ECO:0007744" key="8">
    <source>
        <dbReference type="PDB" id="6JIS"/>
    </source>
</evidence>
<evidence type="ECO:0007744" key="9">
    <source>
        <dbReference type="PDB" id="6JIW"/>
    </source>
</evidence>
<evidence type="ECO:0007744" key="10">
    <source>
        <dbReference type="PDB" id="6L4L"/>
    </source>
</evidence>
<evidence type="ECO:0007829" key="11">
    <source>
        <dbReference type="PDB" id="6JIW"/>
    </source>
</evidence>
<dbReference type="EC" id="5.1.1.24" evidence="1 2"/>
<dbReference type="EMBL" id="BA000017">
    <property type="protein sequence ID" value="BAB58632.1"/>
    <property type="molecule type" value="Genomic_DNA"/>
</dbReference>
<dbReference type="RefSeq" id="WP_001081693.1">
    <property type="nucleotide sequence ID" value="NC_002758.2"/>
</dbReference>
<dbReference type="PDB" id="6JIS">
    <property type="method" value="X-ray"/>
    <property type="resolution" value="1.82 A"/>
    <property type="chains" value="A=1-273"/>
</dbReference>
<dbReference type="PDB" id="6JIW">
    <property type="method" value="X-ray"/>
    <property type="resolution" value="1.58 A"/>
    <property type="chains" value="A=2-273"/>
</dbReference>
<dbReference type="PDB" id="6L4L">
    <property type="method" value="X-ray"/>
    <property type="resolution" value="2.00 A"/>
    <property type="chains" value="A=1-273"/>
</dbReference>
<dbReference type="PDBsum" id="6JIS"/>
<dbReference type="PDBsum" id="6JIW"/>
<dbReference type="PDBsum" id="6L4L"/>
<dbReference type="SMR" id="A0A0H3JU78"/>
<dbReference type="KEGG" id="sav:SAV2470"/>
<dbReference type="HOGENOM" id="CLU_087271_0_0_9"/>
<dbReference type="Proteomes" id="UP000002481">
    <property type="component" value="Chromosome"/>
</dbReference>
<dbReference type="GO" id="GO:0005737">
    <property type="term" value="C:cytoplasm"/>
    <property type="evidence" value="ECO:0007669"/>
    <property type="project" value="UniProtKB-SubCell"/>
</dbReference>
<dbReference type="GO" id="GO:0016853">
    <property type="term" value="F:isomerase activity"/>
    <property type="evidence" value="ECO:0007669"/>
    <property type="project" value="UniProtKB-KW"/>
</dbReference>
<dbReference type="Gene3D" id="3.10.310.10">
    <property type="entry name" value="Diaminopimelate Epimerase, Chain A, domain 1"/>
    <property type="match status" value="2"/>
</dbReference>
<dbReference type="NCBIfam" id="NF033599">
    <property type="entry name" value="His_racem_CntK"/>
    <property type="match status" value="1"/>
</dbReference>
<dbReference type="SUPFAM" id="SSF54506">
    <property type="entry name" value="Diaminopimelate epimerase-like"/>
    <property type="match status" value="1"/>
</dbReference>
<comment type="function">
    <text evidence="1 2">Isomerase that catalyzes the conversion of L-histidine to D-histidine (PubMed:27230378, PubMed:31129210). Functions the biosynthesis of the metallophore staphylopine, which is involved in the acquisition of nickel, cobalt, zinc, copper, and iron, and thus enables bacterial growth inside the host, where metal access is limited (PubMed:27230378). Therefore, this enzyme probably contributes to staphylococcal virulence (PubMed:27230378). The reaction is reversible in vitro, the enzyme can produce D-histidine from the L-stereoisomer and vice versa (PubMed:27230378). Appears to be specific for histidine as it cannot use other amino acids as substrate, including L-alanine and L-methionine (PubMed:27230378, PubMed:31129210).</text>
</comment>
<comment type="catalytic activity">
    <reaction evidence="1 2">
        <text>L-histidine = D-histidine</text>
        <dbReference type="Rhea" id="RHEA:59188"/>
        <dbReference type="ChEBI" id="CHEBI:57595"/>
        <dbReference type="ChEBI" id="CHEBI:142967"/>
        <dbReference type="EC" id="5.1.1.24"/>
    </reaction>
    <physiologicalReaction direction="left-to-right" evidence="5">
        <dbReference type="Rhea" id="RHEA:59189"/>
    </physiologicalReaction>
</comment>
<comment type="subunit">
    <text evidence="2">Homodimer.</text>
</comment>
<comment type="subcellular location">
    <subcellularLocation>
        <location evidence="5">Cytoplasm</location>
    </subcellularLocation>
</comment>
<comment type="induction">
    <text evidence="1">Up-regulated in metal-poor media.</text>
</comment>
<comment type="similarity">
    <text evidence="4">Belongs to the histidine racemase family.</text>
</comment>
<protein>
    <recommendedName>
        <fullName evidence="3">Histidine racemase</fullName>
        <ecNumber evidence="1 2">5.1.1.24</ecNumber>
    </recommendedName>
</protein>
<accession>A0A0H3JU78</accession>
<sequence length="273" mass="31004">MNRQVIEFSKYNPSGNMTILVHSKHDASEYASIANQLMAATHVCCEQVGFIESTQNDDGNDFHLVMSGNEFCGNATMSYIHHLQESHLLKDQQFKVKVSGCSDLVQCAIHDCQYYEVQMPQAHRVVPTTINMGNHSWKALEIIYETYVHYVIPVKQVTTEIQHLVEAFVREQQWSHKYKTVGMMLFDEQRQFLQPLIYIPEIQSLIWENSCGSGTASIGVFNNYQRNDACKDFTVHQPGGSILVTSKRCHQLGYQTSIKGQVTTVATGKAYIE</sequence>
<name>CNTK_STAAM</name>
<feature type="chain" id="PRO_0000447033" description="Histidine racemase">
    <location>
        <begin position="1"/>
        <end position="273"/>
    </location>
</feature>
<feature type="active site" description="Proton acceptor" evidence="6">
    <location>
        <position position="72"/>
    </location>
</feature>
<feature type="active site" description="Proton donor" evidence="6">
    <location>
        <position position="211"/>
    </location>
</feature>
<feature type="mutagenesis site" description="Significantly reduces histidine binding; when associated with S-72." evidence="2">
    <original>N</original>
    <variation>A</variation>
    <location>
        <position position="16"/>
    </location>
</feature>
<feature type="mutagenesis site" description="Significantly reduces histidine binding; when associated with S-72." evidence="2">
    <original>E</original>
    <variation>A</variation>
    <location>
        <position position="46"/>
    </location>
</feature>
<feature type="mutagenesis site" description="Significantly reduces histidine binding; when associated with S-72." evidence="2">
    <original>Q</original>
    <variation>A</variation>
    <location>
        <position position="47"/>
    </location>
</feature>
<feature type="mutagenesis site" description="Loss of activity." evidence="2">
    <original>C</original>
    <variation>S</variation>
    <location>
        <position position="72"/>
    </location>
</feature>
<feature type="mutagenesis site" description="Significantly reduces histidine binding; when associated with S-72." evidence="2">
    <original>E</original>
    <variation>A</variation>
    <location>
        <position position="208"/>
    </location>
</feature>
<feature type="strand" evidence="11">
    <location>
        <begin position="5"/>
        <end position="13"/>
    </location>
</feature>
<feature type="strand" evidence="11">
    <location>
        <begin position="18"/>
        <end position="21"/>
    </location>
</feature>
<feature type="helix" evidence="11">
    <location>
        <begin position="27"/>
        <end position="29"/>
    </location>
</feature>
<feature type="helix" evidence="11">
    <location>
        <begin position="30"/>
        <end position="38"/>
    </location>
</feature>
<feature type="strand" evidence="11">
    <location>
        <begin position="46"/>
        <end position="52"/>
    </location>
</feature>
<feature type="strand" evidence="11">
    <location>
        <begin position="63"/>
        <end position="66"/>
    </location>
</feature>
<feature type="helix" evidence="11">
    <location>
        <begin position="73"/>
        <end position="86"/>
    </location>
</feature>
<feature type="strand" evidence="11">
    <location>
        <begin position="91"/>
        <end position="98"/>
    </location>
</feature>
<feature type="strand" evidence="11">
    <location>
        <begin position="105"/>
        <end position="110"/>
    </location>
</feature>
<feature type="helix" evidence="11">
    <location>
        <begin position="111"/>
        <end position="113"/>
    </location>
</feature>
<feature type="strand" evidence="11">
    <location>
        <begin position="114"/>
        <end position="118"/>
    </location>
</feature>
<feature type="strand" evidence="11">
    <location>
        <begin position="124"/>
        <end position="132"/>
    </location>
</feature>
<feature type="strand" evidence="11">
    <location>
        <begin position="135"/>
        <end position="143"/>
    </location>
</feature>
<feature type="strand" evidence="11">
    <location>
        <begin position="145"/>
        <end position="153"/>
    </location>
</feature>
<feature type="helix" evidence="11">
    <location>
        <begin position="159"/>
        <end position="171"/>
    </location>
</feature>
<feature type="strand" evidence="11">
    <location>
        <begin position="179"/>
        <end position="187"/>
    </location>
</feature>
<feature type="turn" evidence="11">
    <location>
        <begin position="188"/>
        <end position="191"/>
    </location>
</feature>
<feature type="strand" evidence="11">
    <location>
        <begin position="192"/>
        <end position="199"/>
    </location>
</feature>
<feature type="helix" evidence="11">
    <location>
        <begin position="200"/>
        <end position="202"/>
    </location>
</feature>
<feature type="strand" evidence="11">
    <location>
        <begin position="204"/>
        <end position="207"/>
    </location>
</feature>
<feature type="helix" evidence="11">
    <location>
        <begin position="212"/>
        <end position="226"/>
    </location>
</feature>
<feature type="strand" evidence="11">
    <location>
        <begin position="230"/>
        <end position="237"/>
    </location>
</feature>
<feature type="strand" evidence="11">
    <location>
        <begin position="240"/>
        <end position="248"/>
    </location>
</feature>
<feature type="helix" evidence="11">
    <location>
        <begin position="250"/>
        <end position="252"/>
    </location>
</feature>
<feature type="strand" evidence="11">
    <location>
        <begin position="254"/>
        <end position="260"/>
    </location>
</feature>
<feature type="strand" evidence="11">
    <location>
        <begin position="263"/>
        <end position="271"/>
    </location>
</feature>